<dbReference type="EMBL" id="AJ938182">
    <property type="protein sequence ID" value="CAI80990.1"/>
    <property type="status" value="ALT_INIT"/>
    <property type="molecule type" value="Genomic_DNA"/>
</dbReference>
<dbReference type="RefSeq" id="WP_000414678.1">
    <property type="nucleotide sequence ID" value="NC_007622.1"/>
</dbReference>
<dbReference type="SMR" id="Q2YY45"/>
<dbReference type="KEGG" id="sab:SAB1301c"/>
<dbReference type="HOGENOM" id="CLU_000960_28_3_9"/>
<dbReference type="GO" id="GO:0005886">
    <property type="term" value="C:plasma membrane"/>
    <property type="evidence" value="ECO:0007669"/>
    <property type="project" value="UniProtKB-SubCell"/>
</dbReference>
<dbReference type="GO" id="GO:0022857">
    <property type="term" value="F:transmembrane transporter activity"/>
    <property type="evidence" value="ECO:0007669"/>
    <property type="project" value="InterPro"/>
</dbReference>
<dbReference type="GO" id="GO:0046677">
    <property type="term" value="P:response to antibiotic"/>
    <property type="evidence" value="ECO:0007669"/>
    <property type="project" value="UniProtKB-KW"/>
</dbReference>
<dbReference type="CDD" id="cd17321">
    <property type="entry name" value="MFS_MMR_MDR_like"/>
    <property type="match status" value="1"/>
</dbReference>
<dbReference type="FunFam" id="1.20.1250.20:FF:000252">
    <property type="entry name" value="Quinolone resistance protein NorB"/>
    <property type="match status" value="1"/>
</dbReference>
<dbReference type="FunFam" id="1.20.1720.10:FF:000015">
    <property type="entry name" value="Quinolone resistance protein NorB"/>
    <property type="match status" value="1"/>
</dbReference>
<dbReference type="Gene3D" id="1.20.1250.20">
    <property type="entry name" value="MFS general substrate transporter like domains"/>
    <property type="match status" value="1"/>
</dbReference>
<dbReference type="Gene3D" id="1.20.1720.10">
    <property type="entry name" value="Multidrug resistance protein D"/>
    <property type="match status" value="1"/>
</dbReference>
<dbReference type="InterPro" id="IPR011701">
    <property type="entry name" value="MFS"/>
</dbReference>
<dbReference type="InterPro" id="IPR020846">
    <property type="entry name" value="MFS_dom"/>
</dbReference>
<dbReference type="InterPro" id="IPR036259">
    <property type="entry name" value="MFS_trans_sf"/>
</dbReference>
<dbReference type="PANTHER" id="PTHR42718">
    <property type="entry name" value="MAJOR FACILITATOR SUPERFAMILY MULTIDRUG TRANSPORTER MFSC"/>
    <property type="match status" value="1"/>
</dbReference>
<dbReference type="PANTHER" id="PTHR42718:SF9">
    <property type="entry name" value="MAJOR FACILITATOR SUPERFAMILY MULTIDRUG TRANSPORTER MFSC"/>
    <property type="match status" value="1"/>
</dbReference>
<dbReference type="Pfam" id="PF07690">
    <property type="entry name" value="MFS_1"/>
    <property type="match status" value="1"/>
</dbReference>
<dbReference type="SUPFAM" id="SSF103473">
    <property type="entry name" value="MFS general substrate transporter"/>
    <property type="match status" value="1"/>
</dbReference>
<dbReference type="PROSITE" id="PS50850">
    <property type="entry name" value="MFS"/>
    <property type="match status" value="1"/>
</dbReference>
<name>NORB_STAAB</name>
<organism>
    <name type="scientific">Staphylococcus aureus (strain bovine RF122 / ET3-1)</name>
    <dbReference type="NCBI Taxonomy" id="273036"/>
    <lineage>
        <taxon>Bacteria</taxon>
        <taxon>Bacillati</taxon>
        <taxon>Bacillota</taxon>
        <taxon>Bacilli</taxon>
        <taxon>Bacillales</taxon>
        <taxon>Staphylococcaceae</taxon>
        <taxon>Staphylococcus</taxon>
    </lineage>
</organism>
<keyword id="KW-0046">Antibiotic resistance</keyword>
<keyword id="KW-1003">Cell membrane</keyword>
<keyword id="KW-0472">Membrane</keyword>
<keyword id="KW-0812">Transmembrane</keyword>
<keyword id="KW-1133">Transmembrane helix</keyword>
<keyword id="KW-0813">Transport</keyword>
<comment type="function">
    <text evidence="1">Multidrug efflux pump that acts independently of NorA and is one of the factors that confers resistance against diverse quinolones and chemical compounds.</text>
</comment>
<comment type="subcellular location">
    <subcellularLocation>
        <location evidence="3">Cell membrane</location>
        <topology evidence="3">Multi-pass membrane protein</topology>
    </subcellularLocation>
</comment>
<comment type="similarity">
    <text evidence="3">Belongs to the major facilitator superfamily. TCR/Tet family.</text>
</comment>
<comment type="sequence caution" evidence="3">
    <conflict type="erroneous initiation">
        <sequence resource="EMBL-CDS" id="CAI80990"/>
    </conflict>
</comment>
<reference key="1">
    <citation type="journal article" date="2007" name="PLoS ONE">
        <title>Molecular correlates of host specialization in Staphylococcus aureus.</title>
        <authorList>
            <person name="Herron-Olson L."/>
            <person name="Fitzgerald J.R."/>
            <person name="Musser J.M."/>
            <person name="Kapur V."/>
        </authorList>
    </citation>
    <scope>NUCLEOTIDE SEQUENCE [LARGE SCALE GENOMIC DNA]</scope>
    <source>
        <strain>bovine RF122 / ET3-1</strain>
    </source>
</reference>
<accession>Q2YY45</accession>
<feature type="chain" id="PRO_0000361954" description="Quinolone resistance protein NorB">
    <location>
        <begin position="1"/>
        <end position="463"/>
    </location>
</feature>
<feature type="transmembrane region" description="Helical" evidence="2">
    <location>
        <begin position="19"/>
        <end position="39"/>
    </location>
</feature>
<feature type="transmembrane region" description="Helical" evidence="2">
    <location>
        <begin position="53"/>
        <end position="73"/>
    </location>
</feature>
<feature type="transmembrane region" description="Helical" evidence="2">
    <location>
        <begin position="86"/>
        <end position="106"/>
    </location>
</feature>
<feature type="transmembrane region" description="Helical" evidence="2">
    <location>
        <begin position="107"/>
        <end position="127"/>
    </location>
</feature>
<feature type="transmembrane region" description="Helical" evidence="2">
    <location>
        <begin position="142"/>
        <end position="162"/>
    </location>
</feature>
<feature type="transmembrane region" description="Helical" evidence="2">
    <location>
        <begin position="165"/>
        <end position="185"/>
    </location>
</feature>
<feature type="transmembrane region" description="Helical" evidence="2">
    <location>
        <begin position="201"/>
        <end position="221"/>
    </location>
</feature>
<feature type="transmembrane region" description="Helical" evidence="2">
    <location>
        <begin position="230"/>
        <end position="250"/>
    </location>
</feature>
<feature type="transmembrane region" description="Helical" evidence="2">
    <location>
        <begin position="273"/>
        <end position="293"/>
    </location>
</feature>
<feature type="transmembrane region" description="Helical" evidence="2">
    <location>
        <begin position="299"/>
        <end position="319"/>
    </location>
</feature>
<feature type="transmembrane region" description="Helical" evidence="2">
    <location>
        <begin position="334"/>
        <end position="354"/>
    </location>
</feature>
<feature type="transmembrane region" description="Helical" evidence="2">
    <location>
        <begin position="357"/>
        <end position="377"/>
    </location>
</feature>
<feature type="transmembrane region" description="Helical" evidence="2">
    <location>
        <begin position="403"/>
        <end position="423"/>
    </location>
</feature>
<feature type="transmembrane region" description="Helical" evidence="2">
    <location>
        <begin position="435"/>
        <end position="455"/>
    </location>
</feature>
<sequence>MEKPSREAFEGNNKLLIGIVLSVITFWLFAQSLVNVVLILEDSFNTDIGTVNIAVSITALFSGMFVVGVGGLADKYGRIKLTNIGIILNILGSLLIIISNIPLLLIIGRLIQGLSAACIMPATLSIIKSYYIGKDRQRALSYWSIGSWGGSGVCSFFGGAVATLLGWRWIFILSIIISLIALFLIKGTPETKSKSISLNKFDIKGLVLLVIMLLSLNILITKGSELGVTSLLFITLLAIAIGSFSLFIVLEKRATNPLIDFKLFKNKAYTGATASNFLLNGVAGTLIVANTFVQRGLGYSLLQAGSLSITYLVMVLIMIRVGEKLLQTLGCKKPMLIGTGVLIVGECLISLTFLPEILYVICCIIGYLFFGLGLGIYATPSTDTAIANAPLEKVGVAAGIYKMASALGGAFGVALSGAVYAIVSNMTNIYTGAMIALWLNAGMAILSFVIILLLVPKQNDTQL</sequence>
<protein>
    <recommendedName>
        <fullName>Quinolone resistance protein NorB</fullName>
    </recommendedName>
</protein>
<evidence type="ECO:0000250" key="1"/>
<evidence type="ECO:0000255" key="2"/>
<evidence type="ECO:0000305" key="3"/>
<gene>
    <name type="primary">norB</name>
    <name type="ordered locus">SAB1301c</name>
</gene>
<proteinExistence type="inferred from homology"/>